<sequence length="648" mass="71174">MADDTPRQRESISLTPVAHGLENMGAEFLEIMEEGQLPHRHSSLPEGGGSRSKAVWKPFSRWRSLQPTVQARSLCREHWQLFEWISKGLLSTAYIGFLIVACLLDFPRALALFVITCVVLVFLAYNLLKRLLGSKLKKCVKFQGHSCLSLWLKRGLALAAGLGVILWLSLDTAQRPEQLVSFAGICVFLVLLFAGSKHHRAVSWRAVSWGLGLQFVLGLFVIRTEPGFVAFQWLGDQIRVFLSYTEAGSSFVFGEALVKDVFAFQVLPIIVFFSCVMSVLYYLGLMQWVILKIAWLMQVTMGTSATETLSVAGNIFVSQTEAPLLIRPYLADMTLSEVHVVMTGGYATIAGSLLGAYISFGIDASSLIAASVMAAPCALALSKLVYPEVEESKFRSEEGVKLTYGDAQNLVEAASAGAAISVKVVANIAANLIAFLAVLAFINAALSWLGDMVDIQGLSFQLICSYVLRPVAFLMGVAWEDCPVVAELLGIKLFLNEFVAYQELSQYKQRRLAGAEEWLGDKKQWISVRAEILTTYALCGFANFSSIGIMLGGLTSMVPQRRSDFSQIVLRALITGAFVSLVNACVAGILYVPRGVEVDCMSLLNQTVSSSSFEVYLCCRQVFQNTSLEFGQEALHNCCRFYNHTVCT</sequence>
<dbReference type="EMBL" id="BC061230">
    <property type="protein sequence ID" value="AAH61230.1"/>
    <property type="molecule type" value="mRNA"/>
</dbReference>
<dbReference type="CCDS" id="CCDS21402.1"/>
<dbReference type="RefSeq" id="NP_001004184.2">
    <property type="nucleotide sequence ID" value="NM_001004184.3"/>
</dbReference>
<dbReference type="RefSeq" id="XP_006541039.1">
    <property type="nucleotide sequence ID" value="XM_006540976.4"/>
</dbReference>
<dbReference type="RefSeq" id="XP_006541040.1">
    <property type="nucleotide sequence ID" value="XM_006540977.3"/>
</dbReference>
<dbReference type="RefSeq" id="XP_006541041.1">
    <property type="nucleotide sequence ID" value="XM_006540978.3"/>
</dbReference>
<dbReference type="RefSeq" id="XP_006541042.1">
    <property type="nucleotide sequence ID" value="XM_006540979.3"/>
</dbReference>
<dbReference type="SMR" id="E9PXX9"/>
<dbReference type="FunCoup" id="E9PXX9">
    <property type="interactions" value="50"/>
</dbReference>
<dbReference type="STRING" id="10090.ENSMUSP00000112421"/>
<dbReference type="GlyCosmos" id="E9PXX9">
    <property type="glycosylation" value="3 sites, No reported glycans"/>
</dbReference>
<dbReference type="GlyGen" id="E9PXX9">
    <property type="glycosylation" value="3 sites"/>
</dbReference>
<dbReference type="iPTMnet" id="E9PXX9"/>
<dbReference type="PhosphoSitePlus" id="E9PXX9"/>
<dbReference type="PaxDb" id="10090-ENSMUSP00000026820"/>
<dbReference type="ProteomicsDB" id="339181"/>
<dbReference type="Antibodypedia" id="65918">
    <property type="antibodies" value="69 antibodies from 19 providers"/>
</dbReference>
<dbReference type="DNASU" id="434203"/>
<dbReference type="Ensembl" id="ENSMUST00000026820.11">
    <property type="protein sequence ID" value="ENSMUSP00000026820.5"/>
    <property type="gene ID" value="ENSMUSG00000025726.12"/>
</dbReference>
<dbReference type="Ensembl" id="ENSMUST00000119083.2">
    <property type="protein sequence ID" value="ENSMUSP00000112421.2"/>
    <property type="gene ID" value="ENSMUSG00000025726.12"/>
</dbReference>
<dbReference type="GeneID" id="434203"/>
<dbReference type="KEGG" id="mmu:434203"/>
<dbReference type="UCSC" id="uc009ibs.1">
    <property type="organism name" value="mouse"/>
</dbReference>
<dbReference type="AGR" id="MGI:3605073"/>
<dbReference type="CTD" id="9154"/>
<dbReference type="MGI" id="MGI:3605073">
    <property type="gene designation" value="Slc28a1"/>
</dbReference>
<dbReference type="VEuPathDB" id="HostDB:ENSMUSG00000025726"/>
<dbReference type="eggNOG" id="KOG3747">
    <property type="taxonomic scope" value="Eukaryota"/>
</dbReference>
<dbReference type="GeneTree" id="ENSGT00390000016025"/>
<dbReference type="HOGENOM" id="CLU_016813_3_2_1"/>
<dbReference type="InParanoid" id="E9PXX9"/>
<dbReference type="OMA" id="IVWHTVI"/>
<dbReference type="OrthoDB" id="6075923at2759"/>
<dbReference type="PhylomeDB" id="E9PXX9"/>
<dbReference type="TreeFam" id="TF314131"/>
<dbReference type="Reactome" id="R-MMU-83936">
    <property type="pathway name" value="Transport of nucleosides and free purine and pyrimidine bases across the plasma membrane"/>
</dbReference>
<dbReference type="BioGRID-ORCS" id="434203">
    <property type="hits" value="3 hits in 76 CRISPR screens"/>
</dbReference>
<dbReference type="ChiTaRS" id="Slc28a1">
    <property type="organism name" value="mouse"/>
</dbReference>
<dbReference type="PRO" id="PR:E9PXX9"/>
<dbReference type="Proteomes" id="UP000000589">
    <property type="component" value="Chromosome 7"/>
</dbReference>
<dbReference type="RNAct" id="E9PXX9">
    <property type="molecule type" value="protein"/>
</dbReference>
<dbReference type="Bgee" id="ENSMUSG00000025726">
    <property type="expression patterns" value="Expressed in proximal tubule and 27 other cell types or tissues"/>
</dbReference>
<dbReference type="GO" id="GO:0016324">
    <property type="term" value="C:apical plasma membrane"/>
    <property type="evidence" value="ECO:0000250"/>
    <property type="project" value="UniProtKB"/>
</dbReference>
<dbReference type="GO" id="GO:0031526">
    <property type="term" value="C:brush border membrane"/>
    <property type="evidence" value="ECO:0000314"/>
    <property type="project" value="ARUK-UCL"/>
</dbReference>
<dbReference type="GO" id="GO:0005829">
    <property type="term" value="C:cytosol"/>
    <property type="evidence" value="ECO:0007669"/>
    <property type="project" value="Ensembl"/>
</dbReference>
<dbReference type="GO" id="GO:0016607">
    <property type="term" value="C:nuclear speck"/>
    <property type="evidence" value="ECO:0007669"/>
    <property type="project" value="Ensembl"/>
</dbReference>
<dbReference type="GO" id="GO:0005886">
    <property type="term" value="C:plasma membrane"/>
    <property type="evidence" value="ECO:0000250"/>
    <property type="project" value="UniProtKB"/>
</dbReference>
<dbReference type="GO" id="GO:1901474">
    <property type="term" value="F:azole transmembrane transporter activity"/>
    <property type="evidence" value="ECO:0007669"/>
    <property type="project" value="Ensembl"/>
</dbReference>
<dbReference type="GO" id="GO:0015389">
    <property type="term" value="F:pyrimidine- and adenosine-specific:sodium symporter activity"/>
    <property type="evidence" value="ECO:0000250"/>
    <property type="project" value="UniProtKB"/>
</dbReference>
<dbReference type="GO" id="GO:0015213">
    <property type="term" value="F:uridine transmembrane transporter activity"/>
    <property type="evidence" value="ECO:0007669"/>
    <property type="project" value="Ensembl"/>
</dbReference>
<dbReference type="GO" id="GO:0015861">
    <property type="term" value="P:cytidine transport"/>
    <property type="evidence" value="ECO:0007669"/>
    <property type="project" value="Ensembl"/>
</dbReference>
<dbReference type="GO" id="GO:0180015">
    <property type="term" value="P:nucleoside import across plasma membrane"/>
    <property type="evidence" value="ECO:0000250"/>
    <property type="project" value="UniProtKB"/>
</dbReference>
<dbReference type="InterPro" id="IPR008276">
    <property type="entry name" value="C_nuclsd_transpt"/>
</dbReference>
<dbReference type="InterPro" id="IPR018270">
    <property type="entry name" value="C_nuclsd_transpt_met_bac"/>
</dbReference>
<dbReference type="InterPro" id="IPR011657">
    <property type="entry name" value="CNT_C_dom"/>
</dbReference>
<dbReference type="InterPro" id="IPR002668">
    <property type="entry name" value="CNT_N_dom"/>
</dbReference>
<dbReference type="InterPro" id="IPR011642">
    <property type="entry name" value="Gate_dom"/>
</dbReference>
<dbReference type="NCBIfam" id="TIGR00804">
    <property type="entry name" value="nupC"/>
    <property type="match status" value="1"/>
</dbReference>
<dbReference type="PANTHER" id="PTHR10590">
    <property type="entry name" value="SODIUM/NUCLEOSIDE COTRANSPORTER"/>
    <property type="match status" value="1"/>
</dbReference>
<dbReference type="PANTHER" id="PTHR10590:SF16">
    <property type="entry name" value="SODIUM_NUCLEOSIDE COTRANSPORTER 1"/>
    <property type="match status" value="1"/>
</dbReference>
<dbReference type="Pfam" id="PF07670">
    <property type="entry name" value="Gate"/>
    <property type="match status" value="1"/>
</dbReference>
<dbReference type="Pfam" id="PF07662">
    <property type="entry name" value="Nucleos_tra2_C"/>
    <property type="match status" value="1"/>
</dbReference>
<dbReference type="Pfam" id="PF01773">
    <property type="entry name" value="Nucleos_tra2_N"/>
    <property type="match status" value="1"/>
</dbReference>
<comment type="function">
    <text evidence="1">Sodium and pyrimidine nucleoside symporter of the plasma membrane that imports uridine, thymidine and cytidine into cells by coupling their transport to the transmembrane sodium electrochemical gradient. Also transports adenosine, an atypical substrate transported with high apparent affinity, but low maximum velocity. Therefore, exhibits the transport characteristics of the nucleoside transport system cit or N2 subtype (N2/cit). Involved in renal nucleoside (re)absorption.</text>
</comment>
<comment type="catalytic activity">
    <reaction evidence="1">
        <text>uridine(out) + Na(+)(out) = uridine(in) + Na(+)(in)</text>
        <dbReference type="Rhea" id="RHEA:69887"/>
        <dbReference type="ChEBI" id="CHEBI:16704"/>
        <dbReference type="ChEBI" id="CHEBI:29101"/>
    </reaction>
</comment>
<comment type="catalytic activity">
    <reaction evidence="1">
        <text>thymidine(out) + Na(+)(out) = thymidine(in) + Na(+)(in)</text>
        <dbReference type="Rhea" id="RHEA:69891"/>
        <dbReference type="ChEBI" id="CHEBI:17748"/>
        <dbReference type="ChEBI" id="CHEBI:29101"/>
    </reaction>
</comment>
<comment type="catalytic activity">
    <reaction evidence="1">
        <text>cytidine(out) + Na(+)(out) = cytidine(in) + Na(+)(in)</text>
        <dbReference type="Rhea" id="RHEA:69895"/>
        <dbReference type="ChEBI" id="CHEBI:17562"/>
        <dbReference type="ChEBI" id="CHEBI:29101"/>
    </reaction>
</comment>
<comment type="catalytic activity">
    <reaction evidence="1">
        <text>adenosine(out) + Na(+)(out) = adenosine(in) + Na(+)(in)</text>
        <dbReference type="Rhea" id="RHEA:69927"/>
        <dbReference type="ChEBI" id="CHEBI:16335"/>
        <dbReference type="ChEBI" id="CHEBI:29101"/>
    </reaction>
</comment>
<comment type="activity regulation">
    <text evidence="1">Due to its high apparent affinity but slow transport, adenosine could act as a negative regulator of pyrimidine transport under some conditions.</text>
</comment>
<comment type="subcellular location">
    <subcellularLocation>
        <location evidence="1">Cell membrane</location>
        <topology evidence="2">Multi-pass membrane protein</topology>
    </subcellularLocation>
    <subcellularLocation>
        <location evidence="1">Apical cell membrane</location>
        <topology evidence="2">Multi-pass membrane protein</topology>
    </subcellularLocation>
</comment>
<comment type="PTM">
    <text evidence="1">N-glycosylated. N-glycosylation is required for localization to the plasma membrane and the transporter activity.</text>
</comment>
<comment type="similarity">
    <text evidence="4">Belongs to the concentrative nucleoside transporter (CNT) (TC 2.A.41) family.</text>
</comment>
<keyword id="KW-1003">Cell membrane</keyword>
<keyword id="KW-0325">Glycoprotein</keyword>
<keyword id="KW-0472">Membrane</keyword>
<keyword id="KW-1185">Reference proteome</keyword>
<keyword id="KW-0769">Symport</keyword>
<keyword id="KW-0812">Transmembrane</keyword>
<keyword id="KW-1133">Transmembrane helix</keyword>
<keyword id="KW-0813">Transport</keyword>
<reference key="1">
    <citation type="journal article" date="2009" name="PLoS Biol.">
        <title>Lineage-specific biology revealed by a finished genome assembly of the mouse.</title>
        <authorList>
            <person name="Church D.M."/>
            <person name="Goodstadt L."/>
            <person name="Hillier L.W."/>
            <person name="Zody M.C."/>
            <person name="Goldstein S."/>
            <person name="She X."/>
            <person name="Bult C.J."/>
            <person name="Agarwala R."/>
            <person name="Cherry J.L."/>
            <person name="DiCuccio M."/>
            <person name="Hlavina W."/>
            <person name="Kapustin Y."/>
            <person name="Meric P."/>
            <person name="Maglott D."/>
            <person name="Birtle Z."/>
            <person name="Marques A.C."/>
            <person name="Graves T."/>
            <person name="Zhou S."/>
            <person name="Teague B."/>
            <person name="Potamousis K."/>
            <person name="Churas C."/>
            <person name="Place M."/>
            <person name="Herschleb J."/>
            <person name="Runnheim R."/>
            <person name="Forrest D."/>
            <person name="Amos-Landgraf J."/>
            <person name="Schwartz D.C."/>
            <person name="Cheng Z."/>
            <person name="Lindblad-Toh K."/>
            <person name="Eichler E.E."/>
            <person name="Ponting C.P."/>
        </authorList>
    </citation>
    <scope>NUCLEOTIDE SEQUENCE [LARGE SCALE GENOMIC DNA]</scope>
    <source>
        <strain>C57BL/6J</strain>
    </source>
</reference>
<reference key="2">
    <citation type="journal article" date="2004" name="Genome Res.">
        <title>The status, quality, and expansion of the NIH full-length cDNA project: the Mammalian Gene Collection (MGC).</title>
        <authorList>
            <consortium name="The MGC Project Team"/>
        </authorList>
    </citation>
    <scope>NUCLEOTIDE SEQUENCE [LARGE SCALE MRNA]</scope>
    <source>
        <tissue>Kidney</tissue>
    </source>
</reference>
<evidence type="ECO:0000250" key="1">
    <source>
        <dbReference type="UniProtKB" id="O00337"/>
    </source>
</evidence>
<evidence type="ECO:0000250" key="2">
    <source>
        <dbReference type="UniProtKB" id="Q62674"/>
    </source>
</evidence>
<evidence type="ECO:0000255" key="3"/>
<evidence type="ECO:0000305" key="4"/>
<evidence type="ECO:0000312" key="5">
    <source>
        <dbReference type="MGI" id="MGI:3605073"/>
    </source>
</evidence>
<protein>
    <recommendedName>
        <fullName evidence="1">Sodium/nucleoside cotransporter 1</fullName>
    </recommendedName>
    <alternativeName>
        <fullName>Concentrative nucleoside transporter 1</fullName>
        <shortName>CNT 1</shortName>
    </alternativeName>
    <alternativeName>
        <fullName>Na(+)/nucleoside cotransporter 1</fullName>
    </alternativeName>
    <alternativeName>
        <fullName>Sodium-coupled nucleoside transporter 1</fullName>
    </alternativeName>
    <alternativeName>
        <fullName evidence="5">Solute carrier family 28 member 1</fullName>
    </alternativeName>
</protein>
<feature type="chain" id="PRO_0000455292" description="Sodium/nucleoside cotransporter 1">
    <location>
        <begin position="1"/>
        <end position="648"/>
    </location>
</feature>
<feature type="topological domain" description="Cytoplasmic" evidence="2">
    <location>
        <begin position="1"/>
        <end position="83"/>
    </location>
</feature>
<feature type="transmembrane region" description="Helical" evidence="3">
    <location>
        <begin position="84"/>
        <end position="104"/>
    </location>
</feature>
<feature type="topological domain" description="Extracellular" evidence="2">
    <location>
        <begin position="105"/>
        <end position="108"/>
    </location>
</feature>
<feature type="transmembrane region" description="Helical" evidence="3">
    <location>
        <begin position="109"/>
        <end position="129"/>
    </location>
</feature>
<feature type="topological domain" description="Cytoplasmic" evidence="2">
    <location>
        <begin position="130"/>
        <end position="147"/>
    </location>
</feature>
<feature type="transmembrane region" description="Helical" evidence="3">
    <location>
        <begin position="148"/>
        <end position="168"/>
    </location>
</feature>
<feature type="topological domain" description="Extracellular" evidence="2">
    <location>
        <begin position="169"/>
        <end position="175"/>
    </location>
</feature>
<feature type="transmembrane region" description="Helical" evidence="3">
    <location>
        <begin position="176"/>
        <end position="196"/>
    </location>
</feature>
<feature type="topological domain" description="Cytoplasmic" evidence="2">
    <location>
        <begin position="197"/>
        <end position="201"/>
    </location>
</feature>
<feature type="transmembrane region" description="Helical" evidence="3">
    <location>
        <begin position="202"/>
        <end position="222"/>
    </location>
</feature>
<feature type="topological domain" description="Extracellular" evidence="2">
    <location>
        <begin position="223"/>
        <end position="265"/>
    </location>
</feature>
<feature type="transmembrane region" description="Helical" evidence="3">
    <location>
        <begin position="266"/>
        <end position="286"/>
    </location>
</feature>
<feature type="topological domain" description="Cytoplasmic" evidence="2">
    <location>
        <begin position="287"/>
        <end position="294"/>
    </location>
</feature>
<feature type="transmembrane region" description="Helical" evidence="3">
    <location>
        <begin position="295"/>
        <end position="318"/>
    </location>
</feature>
<feature type="topological domain" description="Extracellular" evidence="2">
    <location>
        <begin position="319"/>
        <end position="339"/>
    </location>
</feature>
<feature type="transmembrane region" description="Helical" evidence="3">
    <location>
        <begin position="340"/>
        <end position="360"/>
    </location>
</feature>
<feature type="topological domain" description="Cytoplasmic" evidence="2">
    <location>
        <position position="361"/>
    </location>
</feature>
<feature type="transmembrane region" description="Helical" evidence="3">
    <location>
        <begin position="362"/>
        <end position="380"/>
    </location>
</feature>
<feature type="topological domain" description="Extracellular" evidence="2">
    <location>
        <begin position="381"/>
        <end position="427"/>
    </location>
</feature>
<feature type="transmembrane region" description="Helical" evidence="3">
    <location>
        <begin position="428"/>
        <end position="448"/>
    </location>
</feature>
<feature type="topological domain" description="Cytoplasmic" evidence="2">
    <location>
        <begin position="449"/>
        <end position="470"/>
    </location>
</feature>
<feature type="transmembrane region" description="Helical" evidence="3">
    <location>
        <begin position="471"/>
        <end position="491"/>
    </location>
</feature>
<feature type="topological domain" description="Extracellular" evidence="2">
    <location>
        <begin position="492"/>
        <end position="531"/>
    </location>
</feature>
<feature type="transmembrane region" description="Helical" evidence="3">
    <location>
        <begin position="532"/>
        <end position="552"/>
    </location>
</feature>
<feature type="topological domain" description="Cytoplasmic" evidence="2">
    <location>
        <begin position="553"/>
        <end position="571"/>
    </location>
</feature>
<feature type="transmembrane region" description="Helical" evidence="3">
    <location>
        <begin position="572"/>
        <end position="592"/>
    </location>
</feature>
<feature type="topological domain" description="Extracellular" evidence="2">
    <location>
        <begin position="593"/>
        <end position="648"/>
    </location>
</feature>
<feature type="glycosylation site" description="N-linked (GlcNAc...) asparagine" evidence="3">
    <location>
        <position position="605"/>
    </location>
</feature>
<feature type="glycosylation site" description="N-linked (GlcNAc...) asparagine" evidence="3">
    <location>
        <position position="625"/>
    </location>
</feature>
<feature type="glycosylation site" description="N-linked (GlcNAc...) asparagine" evidence="3">
    <location>
        <position position="643"/>
    </location>
</feature>
<feature type="sequence conflict" description="In Ref. 2; AAH61230." evidence="4" ref="2">
    <original>G</original>
    <variation>S</variation>
    <location>
        <position position="96"/>
    </location>
</feature>
<feature type="sequence conflict" description="In Ref. 2; AAH61230." evidence="4" ref="2">
    <original>K</original>
    <variation>E</variation>
    <location>
        <position position="137"/>
    </location>
</feature>
<gene>
    <name evidence="5" type="primary">Slc28a1</name>
</gene>
<proteinExistence type="evidence at transcript level"/>
<organism>
    <name type="scientific">Mus musculus</name>
    <name type="common">Mouse</name>
    <dbReference type="NCBI Taxonomy" id="10090"/>
    <lineage>
        <taxon>Eukaryota</taxon>
        <taxon>Metazoa</taxon>
        <taxon>Chordata</taxon>
        <taxon>Craniata</taxon>
        <taxon>Vertebrata</taxon>
        <taxon>Euteleostomi</taxon>
        <taxon>Mammalia</taxon>
        <taxon>Eutheria</taxon>
        <taxon>Euarchontoglires</taxon>
        <taxon>Glires</taxon>
        <taxon>Rodentia</taxon>
        <taxon>Myomorpha</taxon>
        <taxon>Muroidea</taxon>
        <taxon>Muridae</taxon>
        <taxon>Murinae</taxon>
        <taxon>Mus</taxon>
        <taxon>Mus</taxon>
    </lineage>
</organism>
<accession>E9PXX9</accession>
<accession>Q6P8I9</accession>
<name>S28A1_MOUSE</name>